<accession>Q0CEZ9</accession>
<sequence length="556" mass="58635">MSLPGLDLTQPSAEREFAPAPPSQITLSAGSEWRFEVAFGTTVRVKLISGTAELFGTELAPSQTYTFCGTKSAIYTWHGCELEVGAGDAISALEATGMNGAATAQGFGAGGCQSEYTAEETPMVEYANVHFALETMRQEAKATGKDGPRVLILGPEDAGKTSLSKILTAYATKIGRQPIVVNLDPAEGMLSVPGTLTATAFRTMMDIEEGWGSSPMSGPSAVPVKLPLVYFYPMQNPLEGDGSVYRSIVSRLALSVMGRMAEDEDSRETGIIVDTPGVLSQSKAGSLEMINHIVTEFSITTILVIGSERLYSTMMKNYDNKPTSSASAVASDERISVVKLSKSGGCVDRDAAFMKHVRESQIRTYFFGNPIPSTASAALSVSASSTTNVTLSPHAQQLDFNSLGLYNYNITSTEEDEDEYDPAQFGASDAFLPGGANDAEQGASQQDENPSATPLPGIVSSIESAVPSGASNVPLKKLLPPAPSALANSLLAITHVPPTATPSEIRDSSIMGFLYVADVDSEKGKIRVLAPVGGRVPPRAIVWGKRWPGEVVGLVG</sequence>
<protein>
    <recommendedName>
        <fullName evidence="1">mRNA cleavage and polyadenylation factor clp1</fullName>
    </recommendedName>
</protein>
<keyword id="KW-0067">ATP-binding</keyword>
<keyword id="KW-0507">mRNA processing</keyword>
<keyword id="KW-0547">Nucleotide-binding</keyword>
<keyword id="KW-0539">Nucleus</keyword>
<keyword id="KW-1185">Reference proteome</keyword>
<reference key="1">
    <citation type="submission" date="2005-09" db="EMBL/GenBank/DDBJ databases">
        <title>Annotation of the Aspergillus terreus NIH2624 genome.</title>
        <authorList>
            <person name="Birren B.W."/>
            <person name="Lander E.S."/>
            <person name="Galagan J.E."/>
            <person name="Nusbaum C."/>
            <person name="Devon K."/>
            <person name="Henn M."/>
            <person name="Ma L.-J."/>
            <person name="Jaffe D.B."/>
            <person name="Butler J."/>
            <person name="Alvarez P."/>
            <person name="Gnerre S."/>
            <person name="Grabherr M."/>
            <person name="Kleber M."/>
            <person name="Mauceli E.W."/>
            <person name="Brockman W."/>
            <person name="Rounsley S."/>
            <person name="Young S.K."/>
            <person name="LaButti K."/>
            <person name="Pushparaj V."/>
            <person name="DeCaprio D."/>
            <person name="Crawford M."/>
            <person name="Koehrsen M."/>
            <person name="Engels R."/>
            <person name="Montgomery P."/>
            <person name="Pearson M."/>
            <person name="Howarth C."/>
            <person name="Larson L."/>
            <person name="Luoma S."/>
            <person name="White J."/>
            <person name="Alvarado L."/>
            <person name="Kodira C.D."/>
            <person name="Zeng Q."/>
            <person name="Oleary S."/>
            <person name="Yandava C."/>
            <person name="Denning D.W."/>
            <person name="Nierman W.C."/>
            <person name="Milne T."/>
            <person name="Madden K."/>
        </authorList>
    </citation>
    <scope>NUCLEOTIDE SEQUENCE [LARGE SCALE GENOMIC DNA]</scope>
    <source>
        <strain>NIH 2624 / FGSC A1156</strain>
    </source>
</reference>
<gene>
    <name type="primary">clp1</name>
    <name type="ORF">ATEG_07735</name>
</gene>
<feature type="chain" id="PRO_0000375197" description="mRNA cleavage and polyadenylation factor clp1">
    <location>
        <begin position="1"/>
        <end position="556"/>
    </location>
</feature>
<feature type="region of interest" description="Disordered" evidence="2">
    <location>
        <begin position="1"/>
        <end position="21"/>
    </location>
</feature>
<feature type="region of interest" description="Disordered" evidence="2">
    <location>
        <begin position="414"/>
        <end position="458"/>
    </location>
</feature>
<feature type="compositionally biased region" description="Polar residues" evidence="2">
    <location>
        <begin position="442"/>
        <end position="452"/>
    </location>
</feature>
<feature type="binding site" evidence="1">
    <location>
        <position position="32"/>
    </location>
    <ligand>
        <name>ATP</name>
        <dbReference type="ChEBI" id="CHEBI:30616"/>
    </ligand>
</feature>
<feature type="binding site" evidence="1">
    <location>
        <position position="71"/>
    </location>
    <ligand>
        <name>ATP</name>
        <dbReference type="ChEBI" id="CHEBI:30616"/>
    </ligand>
</feature>
<feature type="binding site" evidence="1">
    <location>
        <begin position="157"/>
        <end position="162"/>
    </location>
    <ligand>
        <name>ATP</name>
        <dbReference type="ChEBI" id="CHEBI:30616"/>
    </ligand>
</feature>
<name>CLP1_ASPTN</name>
<evidence type="ECO:0000255" key="1">
    <source>
        <dbReference type="HAMAP-Rule" id="MF_03035"/>
    </source>
</evidence>
<evidence type="ECO:0000256" key="2">
    <source>
        <dbReference type="SAM" id="MobiDB-lite"/>
    </source>
</evidence>
<evidence type="ECO:0000305" key="3"/>
<dbReference type="EMBL" id="CH476604">
    <property type="protein sequence ID" value="EAU31997.1"/>
    <property type="status" value="ALT_INIT"/>
    <property type="molecule type" value="Genomic_DNA"/>
</dbReference>
<dbReference type="RefSeq" id="XP_001216356.1">
    <property type="nucleotide sequence ID" value="XM_001216356.1"/>
</dbReference>
<dbReference type="SMR" id="Q0CEZ9"/>
<dbReference type="STRING" id="341663.Q0CEZ9"/>
<dbReference type="EnsemblFungi" id="EAU31997">
    <property type="protein sequence ID" value="EAU31997"/>
    <property type="gene ID" value="ATEG_07735"/>
</dbReference>
<dbReference type="GeneID" id="4322871"/>
<dbReference type="eggNOG" id="KOG2749">
    <property type="taxonomic scope" value="Eukaryota"/>
</dbReference>
<dbReference type="OrthoDB" id="258143at2759"/>
<dbReference type="Proteomes" id="UP000007963">
    <property type="component" value="Unassembled WGS sequence"/>
</dbReference>
<dbReference type="GO" id="GO:0005849">
    <property type="term" value="C:mRNA cleavage factor complex"/>
    <property type="evidence" value="ECO:0007669"/>
    <property type="project" value="UniProtKB-UniRule"/>
</dbReference>
<dbReference type="GO" id="GO:0005524">
    <property type="term" value="F:ATP binding"/>
    <property type="evidence" value="ECO:0007669"/>
    <property type="project" value="UniProtKB-UniRule"/>
</dbReference>
<dbReference type="GO" id="GO:0051731">
    <property type="term" value="F:polynucleotide 5'-hydroxyl-kinase activity"/>
    <property type="evidence" value="ECO:0007669"/>
    <property type="project" value="InterPro"/>
</dbReference>
<dbReference type="GO" id="GO:0031124">
    <property type="term" value="P:mRNA 3'-end processing"/>
    <property type="evidence" value="ECO:0007669"/>
    <property type="project" value="UniProtKB-UniRule"/>
</dbReference>
<dbReference type="GO" id="GO:0006388">
    <property type="term" value="P:tRNA splicing, via endonucleolytic cleavage and ligation"/>
    <property type="evidence" value="ECO:0007669"/>
    <property type="project" value="TreeGrafter"/>
</dbReference>
<dbReference type="FunFam" id="3.40.50.300:FF:002095">
    <property type="entry name" value="mRNA cleavage and polyadenylation factor clp1"/>
    <property type="match status" value="1"/>
</dbReference>
<dbReference type="FunFam" id="2.60.120.1030:FF:000001">
    <property type="entry name" value="Protein CLP1 homolog 5"/>
    <property type="match status" value="1"/>
</dbReference>
<dbReference type="Gene3D" id="2.60.120.1030">
    <property type="entry name" value="Clp1, DNA binding domain"/>
    <property type="match status" value="1"/>
</dbReference>
<dbReference type="Gene3D" id="3.40.50.300">
    <property type="entry name" value="P-loop containing nucleotide triphosphate hydrolases"/>
    <property type="match status" value="1"/>
</dbReference>
<dbReference type="Gene3D" id="2.40.30.330">
    <property type="entry name" value="Pre-mRNA cleavage complex subunit Clp1, C-terminal domain"/>
    <property type="match status" value="1"/>
</dbReference>
<dbReference type="HAMAP" id="MF_03035">
    <property type="entry name" value="Clp1"/>
    <property type="match status" value="1"/>
</dbReference>
<dbReference type="InterPro" id="IPR028606">
    <property type="entry name" value="Clp1"/>
</dbReference>
<dbReference type="InterPro" id="IPR045116">
    <property type="entry name" value="Clp1/Grc3"/>
</dbReference>
<dbReference type="InterPro" id="IPR010655">
    <property type="entry name" value="Clp1_C"/>
</dbReference>
<dbReference type="InterPro" id="IPR038238">
    <property type="entry name" value="Clp1_C_sf"/>
</dbReference>
<dbReference type="InterPro" id="IPR032324">
    <property type="entry name" value="Clp1_N"/>
</dbReference>
<dbReference type="InterPro" id="IPR038239">
    <property type="entry name" value="Clp1_N_sf"/>
</dbReference>
<dbReference type="InterPro" id="IPR032319">
    <property type="entry name" value="CLP1_P"/>
</dbReference>
<dbReference type="InterPro" id="IPR027417">
    <property type="entry name" value="P-loop_NTPase"/>
</dbReference>
<dbReference type="PANTHER" id="PTHR12755">
    <property type="entry name" value="CLEAVAGE/POLYADENYLATION FACTOR IA SUBUNIT CLP1P"/>
    <property type="match status" value="1"/>
</dbReference>
<dbReference type="PANTHER" id="PTHR12755:SF6">
    <property type="entry name" value="POLYRIBONUCLEOTIDE 5'-HYDROXYL-KINASE CLP1"/>
    <property type="match status" value="1"/>
</dbReference>
<dbReference type="Pfam" id="PF06807">
    <property type="entry name" value="Clp1"/>
    <property type="match status" value="1"/>
</dbReference>
<dbReference type="Pfam" id="PF16573">
    <property type="entry name" value="CLP1_N"/>
    <property type="match status" value="1"/>
</dbReference>
<dbReference type="Pfam" id="PF16575">
    <property type="entry name" value="CLP1_P"/>
    <property type="match status" value="1"/>
</dbReference>
<dbReference type="SUPFAM" id="SSF52540">
    <property type="entry name" value="P-loop containing nucleoside triphosphate hydrolases"/>
    <property type="match status" value="1"/>
</dbReference>
<proteinExistence type="inferred from homology"/>
<organism>
    <name type="scientific">Aspergillus terreus (strain NIH 2624 / FGSC A1156)</name>
    <dbReference type="NCBI Taxonomy" id="341663"/>
    <lineage>
        <taxon>Eukaryota</taxon>
        <taxon>Fungi</taxon>
        <taxon>Dikarya</taxon>
        <taxon>Ascomycota</taxon>
        <taxon>Pezizomycotina</taxon>
        <taxon>Eurotiomycetes</taxon>
        <taxon>Eurotiomycetidae</taxon>
        <taxon>Eurotiales</taxon>
        <taxon>Aspergillaceae</taxon>
        <taxon>Aspergillus</taxon>
        <taxon>Aspergillus subgen. Circumdati</taxon>
    </lineage>
</organism>
<comment type="function">
    <text evidence="1">Required for endonucleolytic cleavage during polyadenylation-dependent pre-mRNA 3'-end formation.</text>
</comment>
<comment type="subunit">
    <text evidence="1">Component of a pre-mRNA cleavage factor complex. Interacts directly with PCF11.</text>
</comment>
<comment type="subcellular location">
    <subcellularLocation>
        <location evidence="1">Nucleus</location>
    </subcellularLocation>
</comment>
<comment type="similarity">
    <text evidence="1">Belongs to the Clp1 family. Clp1 subfamily.</text>
</comment>
<comment type="caution">
    <text evidence="3">May lack the polyribonucleotide 5'-hydroxyl-kinase and polynucleotide 5'-hydroxyl-kinase activities that are characteristic of the human ortholog.</text>
</comment>
<comment type="sequence caution" evidence="3">
    <conflict type="erroneous initiation">
        <sequence resource="EMBL-CDS" id="EAU31997"/>
    </conflict>
</comment>